<protein>
    <recommendedName>
        <fullName>Putative uncharacterized protein YDL114W-A</fullName>
    </recommendedName>
</protein>
<comment type="miscellaneous">
    <text evidence="1">Completely overlaps IWR1.</text>
</comment>
<comment type="caution">
    <text evidence="2">Product of a dubious gene prediction unlikely to encode a functional protein. Because of that it is not part of the S.cerevisiae S288c complete/reference proteome set.</text>
</comment>
<proteinExistence type="uncertain"/>
<dbReference type="EMBL" id="Z74162">
    <property type="status" value="NOT_ANNOTATED_CDS"/>
    <property type="molecule type" value="Genomic_DNA"/>
</dbReference>
<dbReference type="EMBL" id="Z74163">
    <property type="status" value="NOT_ANNOTATED_CDS"/>
    <property type="molecule type" value="Genomic_DNA"/>
</dbReference>
<dbReference type="STRING" id="4932.YDL114W-A"/>
<dbReference type="PaxDb" id="4932-YDL114W-A"/>
<dbReference type="EnsemblFungi" id="YDL114W-A_mRNA">
    <property type="protein sequence ID" value="YDL114W-A"/>
    <property type="gene ID" value="YDL114W-A"/>
</dbReference>
<dbReference type="AGR" id="SGD:S000007598"/>
<dbReference type="SGD" id="S000007598">
    <property type="gene designation" value="YDL114W-A"/>
</dbReference>
<dbReference type="HOGENOM" id="CLU_3351337_0_0_1"/>
<accession>P0C5M5</accession>
<sequence length="37" mass="4317">MNFCFFTLFPSSITELSQMNLVSQTHFCYIGRITTHT</sequence>
<feature type="chain" id="PRO_0000309023" description="Putative uncharacterized protein YDL114W-A">
    <location>
        <begin position="1"/>
        <end position="37"/>
    </location>
</feature>
<evidence type="ECO:0000305" key="1"/>
<evidence type="ECO:0000305" key="2">
    <source>
    </source>
</evidence>
<name>YDL14_YEAST</name>
<gene>
    <name type="ordered locus">YDL114W-A</name>
</gene>
<organism>
    <name type="scientific">Saccharomyces cerevisiae (strain ATCC 204508 / S288c)</name>
    <name type="common">Baker's yeast</name>
    <dbReference type="NCBI Taxonomy" id="559292"/>
    <lineage>
        <taxon>Eukaryota</taxon>
        <taxon>Fungi</taxon>
        <taxon>Dikarya</taxon>
        <taxon>Ascomycota</taxon>
        <taxon>Saccharomycotina</taxon>
        <taxon>Saccharomycetes</taxon>
        <taxon>Saccharomycetales</taxon>
        <taxon>Saccharomycetaceae</taxon>
        <taxon>Saccharomyces</taxon>
    </lineage>
</organism>
<reference key="1">
    <citation type="journal article" date="1997" name="Nature">
        <title>The nucleotide sequence of Saccharomyces cerevisiae chromosome IV.</title>
        <authorList>
            <person name="Jacq C."/>
            <person name="Alt-Moerbe J."/>
            <person name="Andre B."/>
            <person name="Arnold W."/>
            <person name="Bahr A."/>
            <person name="Ballesta J.P.G."/>
            <person name="Bargues M."/>
            <person name="Baron L."/>
            <person name="Becker A."/>
            <person name="Biteau N."/>
            <person name="Bloecker H."/>
            <person name="Blugeon C."/>
            <person name="Boskovic J."/>
            <person name="Brandt P."/>
            <person name="Brueckner M."/>
            <person name="Buitrago M.J."/>
            <person name="Coster F."/>
            <person name="Delaveau T."/>
            <person name="del Rey F."/>
            <person name="Dujon B."/>
            <person name="Eide L.G."/>
            <person name="Garcia-Cantalejo J.M."/>
            <person name="Goffeau A."/>
            <person name="Gomez-Peris A."/>
            <person name="Granotier C."/>
            <person name="Hanemann V."/>
            <person name="Hankeln T."/>
            <person name="Hoheisel J.D."/>
            <person name="Jaeger W."/>
            <person name="Jimenez A."/>
            <person name="Jonniaux J.-L."/>
            <person name="Kraemer C."/>
            <person name="Kuester H."/>
            <person name="Laamanen P."/>
            <person name="Legros Y."/>
            <person name="Louis E.J."/>
            <person name="Moeller-Rieker S."/>
            <person name="Monnet A."/>
            <person name="Moro M."/>
            <person name="Mueller-Auer S."/>
            <person name="Nussbaumer B."/>
            <person name="Paricio N."/>
            <person name="Paulin L."/>
            <person name="Perea J."/>
            <person name="Perez-Alonso M."/>
            <person name="Perez-Ortin J.E."/>
            <person name="Pohl T.M."/>
            <person name="Prydz H."/>
            <person name="Purnelle B."/>
            <person name="Rasmussen S.W."/>
            <person name="Remacha M.A."/>
            <person name="Revuelta J.L."/>
            <person name="Rieger M."/>
            <person name="Salom D."/>
            <person name="Saluz H.P."/>
            <person name="Saiz J.E."/>
            <person name="Saren A.-M."/>
            <person name="Schaefer M."/>
            <person name="Scharfe M."/>
            <person name="Schmidt E.R."/>
            <person name="Schneider C."/>
            <person name="Scholler P."/>
            <person name="Schwarz S."/>
            <person name="Soler-Mira A."/>
            <person name="Urrestarazu L.A."/>
            <person name="Verhasselt P."/>
            <person name="Vissers S."/>
            <person name="Voet M."/>
            <person name="Volckaert G."/>
            <person name="Wagner G."/>
            <person name="Wambutt R."/>
            <person name="Wedler E."/>
            <person name="Wedler H."/>
            <person name="Woelfl S."/>
            <person name="Harris D.E."/>
            <person name="Bowman S."/>
            <person name="Brown D."/>
            <person name="Churcher C.M."/>
            <person name="Connor R."/>
            <person name="Dedman K."/>
            <person name="Gentles S."/>
            <person name="Hamlin N."/>
            <person name="Hunt S."/>
            <person name="Jones L."/>
            <person name="McDonald S."/>
            <person name="Murphy L.D."/>
            <person name="Niblett D."/>
            <person name="Odell C."/>
            <person name="Oliver K."/>
            <person name="Rajandream M.A."/>
            <person name="Richards C."/>
            <person name="Shore L."/>
            <person name="Walsh S.V."/>
            <person name="Barrell B.G."/>
            <person name="Dietrich F.S."/>
            <person name="Mulligan J.T."/>
            <person name="Allen E."/>
            <person name="Araujo R."/>
            <person name="Aviles E."/>
            <person name="Berno A."/>
            <person name="Carpenter J."/>
            <person name="Chen E."/>
            <person name="Cherry J.M."/>
            <person name="Chung E."/>
            <person name="Duncan M."/>
            <person name="Hunicke-Smith S."/>
            <person name="Hyman R.W."/>
            <person name="Komp C."/>
            <person name="Lashkari D."/>
            <person name="Lew H."/>
            <person name="Lin D."/>
            <person name="Mosedale D."/>
            <person name="Nakahara K."/>
            <person name="Namath A."/>
            <person name="Oefner P."/>
            <person name="Oh C."/>
            <person name="Petel F.X."/>
            <person name="Roberts D."/>
            <person name="Schramm S."/>
            <person name="Schroeder M."/>
            <person name="Shogren T."/>
            <person name="Shroff N."/>
            <person name="Winant A."/>
            <person name="Yelton M.A."/>
            <person name="Botstein D."/>
            <person name="Davis R.W."/>
            <person name="Johnston M."/>
            <person name="Andrews S."/>
            <person name="Brinkman R."/>
            <person name="Cooper J."/>
            <person name="Ding H."/>
            <person name="Du Z."/>
            <person name="Favello A."/>
            <person name="Fulton L."/>
            <person name="Gattung S."/>
            <person name="Greco T."/>
            <person name="Hallsworth K."/>
            <person name="Hawkins J."/>
            <person name="Hillier L.W."/>
            <person name="Jier M."/>
            <person name="Johnson D."/>
            <person name="Johnston L."/>
            <person name="Kirsten J."/>
            <person name="Kucaba T."/>
            <person name="Langston Y."/>
            <person name="Latreille P."/>
            <person name="Le T."/>
            <person name="Mardis E."/>
            <person name="Menezes S."/>
            <person name="Miller N."/>
            <person name="Nhan M."/>
            <person name="Pauley A."/>
            <person name="Peluso D."/>
            <person name="Rifkin L."/>
            <person name="Riles L."/>
            <person name="Taich A."/>
            <person name="Trevaskis E."/>
            <person name="Vignati D."/>
            <person name="Wilcox L."/>
            <person name="Wohldman P."/>
            <person name="Vaudin M."/>
            <person name="Wilson R."/>
            <person name="Waterston R."/>
            <person name="Albermann K."/>
            <person name="Hani J."/>
            <person name="Heumann K."/>
            <person name="Kleine K."/>
            <person name="Mewes H.-W."/>
            <person name="Zollner A."/>
            <person name="Zaccaria P."/>
        </authorList>
    </citation>
    <scope>NUCLEOTIDE SEQUENCE [LARGE SCALE GENOMIC DNA]</scope>
    <source>
        <strain>ATCC 204508 / S288c</strain>
    </source>
</reference>
<reference key="2">
    <citation type="journal article" date="2014" name="G3 (Bethesda)">
        <title>The reference genome sequence of Saccharomyces cerevisiae: Then and now.</title>
        <authorList>
            <person name="Engel S.R."/>
            <person name="Dietrich F.S."/>
            <person name="Fisk D.G."/>
            <person name="Binkley G."/>
            <person name="Balakrishnan R."/>
            <person name="Costanzo M.C."/>
            <person name="Dwight S.S."/>
            <person name="Hitz B.C."/>
            <person name="Karra K."/>
            <person name="Nash R.S."/>
            <person name="Weng S."/>
            <person name="Wong E.D."/>
            <person name="Lloyd P."/>
            <person name="Skrzypek M.S."/>
            <person name="Miyasato S.R."/>
            <person name="Simison M."/>
            <person name="Cherry J.M."/>
        </authorList>
    </citation>
    <scope>GENOME REANNOTATION</scope>
    <source>
        <strain>ATCC 204508 / S288c</strain>
    </source>
</reference>
<reference key="3">
    <citation type="journal article" date="2000" name="FEBS Lett.">
        <title>Genomic exploration of the hemiascomycetous yeasts: 4. The genome of Saccharomyces cerevisiae revisited.</title>
        <authorList>
            <person name="Blandin G."/>
            <person name="Durrens P."/>
            <person name="Tekaia F."/>
            <person name="Aigle M."/>
            <person name="Bolotin-Fukuhara M."/>
            <person name="Bon E."/>
            <person name="Casaregola S."/>
            <person name="de Montigny J."/>
            <person name="Gaillardin C."/>
            <person name="Lepingle A."/>
            <person name="Llorente B."/>
            <person name="Malpertuy A."/>
            <person name="Neuveglise C."/>
            <person name="Ozier-Kalogeropoulos O."/>
            <person name="Perrin A."/>
            <person name="Potier S."/>
            <person name="Souciet J.-L."/>
            <person name="Talla E."/>
            <person name="Toffano-Nioche C."/>
            <person name="Wesolowski-Louvel M."/>
            <person name="Marck C."/>
            <person name="Dujon B."/>
        </authorList>
    </citation>
    <scope>GENOME REANNOTATION</scope>
</reference>